<gene>
    <name evidence="1" type="primary">cyoE</name>
    <name type="ordered locus">A1S_2170</name>
</gene>
<evidence type="ECO:0000255" key="1">
    <source>
        <dbReference type="HAMAP-Rule" id="MF_00154"/>
    </source>
</evidence>
<keyword id="KW-0997">Cell inner membrane</keyword>
<keyword id="KW-1003">Cell membrane</keyword>
<keyword id="KW-0350">Heme biosynthesis</keyword>
<keyword id="KW-0472">Membrane</keyword>
<keyword id="KW-0808">Transferase</keyword>
<keyword id="KW-0812">Transmembrane</keyword>
<keyword id="KW-1133">Transmembrane helix</keyword>
<proteinExistence type="inferred from homology"/>
<reference key="1">
    <citation type="journal article" date="2007" name="Genes Dev.">
        <title>New insights into Acinetobacter baumannii pathogenesis revealed by high-density pyrosequencing and transposon mutagenesis.</title>
        <authorList>
            <person name="Smith M.G."/>
            <person name="Gianoulis T.A."/>
            <person name="Pukatzki S."/>
            <person name="Mekalanos J.J."/>
            <person name="Ornston L.N."/>
            <person name="Gerstein M."/>
            <person name="Snyder M."/>
        </authorList>
    </citation>
    <scope>NUCLEOTIDE SEQUENCE [LARGE SCALE GENOMIC DNA]</scope>
    <source>
        <strain>ATCC 17978 / DSM 105126 / CIP 53.77 / LMG 1025 / NCDC KC755 / 5377</strain>
    </source>
</reference>
<accession>A3M6Q3</accession>
<comment type="function">
    <text evidence="1">Converts heme B (protoheme IX) to heme O by substitution of the vinyl group on carbon 2 of heme B porphyrin ring with a hydroxyethyl farnesyl side group.</text>
</comment>
<comment type="catalytic activity">
    <reaction evidence="1">
        <text>heme b + (2E,6E)-farnesyl diphosphate + H2O = Fe(II)-heme o + diphosphate</text>
        <dbReference type="Rhea" id="RHEA:28070"/>
        <dbReference type="ChEBI" id="CHEBI:15377"/>
        <dbReference type="ChEBI" id="CHEBI:33019"/>
        <dbReference type="ChEBI" id="CHEBI:60344"/>
        <dbReference type="ChEBI" id="CHEBI:60530"/>
        <dbReference type="ChEBI" id="CHEBI:175763"/>
        <dbReference type="EC" id="2.5.1.141"/>
    </reaction>
</comment>
<comment type="pathway">
    <text evidence="1">Porphyrin-containing compound metabolism; heme O biosynthesis; heme O from protoheme: step 1/1.</text>
</comment>
<comment type="subcellular location">
    <subcellularLocation>
        <location evidence="1">Cell inner membrane</location>
        <topology evidence="1">Multi-pass membrane protein</topology>
    </subcellularLocation>
</comment>
<comment type="miscellaneous">
    <text evidence="1">Carbon 2 of the heme B porphyrin ring is defined according to the Fischer nomenclature.</text>
</comment>
<comment type="similarity">
    <text evidence="1">Belongs to the UbiA prenyltransferase family. Protoheme IX farnesyltransferase subfamily.</text>
</comment>
<sequence length="292" mass="32719">MLKKYLFLTKPGILFGNFITTLGGFFLAAQGSIDILLLLLTLIGTTLVVASGCVVNNVIDQDIDTKMQRTQNRALVKKTISPTVALVYAFVLGVMGFSILWFGVNGYAFLFAMIGFIVYVGFYSLWTKRTSIHQTVIGSISGASPPVIGYTAVTHQFDVAALLLFLAYALWQMPHSWAIAIYRFDDYKNAGIPILPVARSIYRTKIECVIYILLFAAVLNGLYCFGYTNVFFLITFNALTAYWFYLSIIGFKAENDQLWAKRFFLYSVILITLLSLSFSFTYQSPAPNLPLF</sequence>
<name>CYOE_ACIBT</name>
<organism>
    <name type="scientific">Acinetobacter baumannii (strain ATCC 17978 / DSM 105126 / CIP 53.77 / LMG 1025 / NCDC KC755 / 5377)</name>
    <dbReference type="NCBI Taxonomy" id="400667"/>
    <lineage>
        <taxon>Bacteria</taxon>
        <taxon>Pseudomonadati</taxon>
        <taxon>Pseudomonadota</taxon>
        <taxon>Gammaproteobacteria</taxon>
        <taxon>Moraxellales</taxon>
        <taxon>Moraxellaceae</taxon>
        <taxon>Acinetobacter</taxon>
        <taxon>Acinetobacter calcoaceticus/baumannii complex</taxon>
    </lineage>
</organism>
<protein>
    <recommendedName>
        <fullName evidence="1">Protoheme IX farnesyltransferase</fullName>
        <ecNumber evidence="1">2.5.1.141</ecNumber>
    </recommendedName>
    <alternativeName>
        <fullName evidence="1">Heme B farnesyltransferase</fullName>
    </alternativeName>
    <alternativeName>
        <fullName evidence="1">Heme O synthase</fullName>
    </alternativeName>
</protein>
<dbReference type="EC" id="2.5.1.141" evidence="1"/>
<dbReference type="EMBL" id="CP000521">
    <property type="protein sequence ID" value="ABO12597.2"/>
    <property type="molecule type" value="Genomic_DNA"/>
</dbReference>
<dbReference type="RefSeq" id="WP_000915319.1">
    <property type="nucleotide sequence ID" value="NZ_CP053098.1"/>
</dbReference>
<dbReference type="SMR" id="A3M6Q3"/>
<dbReference type="KEGG" id="acb:A1S_2170"/>
<dbReference type="HOGENOM" id="CLU_029631_0_0_6"/>
<dbReference type="UniPathway" id="UPA00834">
    <property type="reaction ID" value="UER00712"/>
</dbReference>
<dbReference type="GO" id="GO:0005886">
    <property type="term" value="C:plasma membrane"/>
    <property type="evidence" value="ECO:0007669"/>
    <property type="project" value="UniProtKB-SubCell"/>
</dbReference>
<dbReference type="GO" id="GO:0008495">
    <property type="term" value="F:protoheme IX farnesyltransferase activity"/>
    <property type="evidence" value="ECO:0007669"/>
    <property type="project" value="UniProtKB-UniRule"/>
</dbReference>
<dbReference type="GO" id="GO:0048034">
    <property type="term" value="P:heme O biosynthetic process"/>
    <property type="evidence" value="ECO:0007669"/>
    <property type="project" value="UniProtKB-UniRule"/>
</dbReference>
<dbReference type="CDD" id="cd13957">
    <property type="entry name" value="PT_UbiA_Cox10"/>
    <property type="match status" value="1"/>
</dbReference>
<dbReference type="FunFam" id="1.10.357.140:FF:000001">
    <property type="entry name" value="Protoheme IX farnesyltransferase"/>
    <property type="match status" value="1"/>
</dbReference>
<dbReference type="Gene3D" id="1.10.357.140">
    <property type="entry name" value="UbiA prenyltransferase"/>
    <property type="match status" value="1"/>
</dbReference>
<dbReference type="HAMAP" id="MF_00154">
    <property type="entry name" value="CyoE_CtaB"/>
    <property type="match status" value="1"/>
</dbReference>
<dbReference type="InterPro" id="IPR006369">
    <property type="entry name" value="Protohaem_IX_farnesylTrfase"/>
</dbReference>
<dbReference type="InterPro" id="IPR000537">
    <property type="entry name" value="UbiA_prenyltransferase"/>
</dbReference>
<dbReference type="InterPro" id="IPR030470">
    <property type="entry name" value="UbiA_prenylTrfase_CS"/>
</dbReference>
<dbReference type="InterPro" id="IPR044878">
    <property type="entry name" value="UbiA_sf"/>
</dbReference>
<dbReference type="NCBIfam" id="TIGR01473">
    <property type="entry name" value="cyoE_ctaB"/>
    <property type="match status" value="1"/>
</dbReference>
<dbReference type="NCBIfam" id="NF003348">
    <property type="entry name" value="PRK04375.1-1"/>
    <property type="match status" value="1"/>
</dbReference>
<dbReference type="PANTHER" id="PTHR43448">
    <property type="entry name" value="PROTOHEME IX FARNESYLTRANSFERASE, MITOCHONDRIAL"/>
    <property type="match status" value="1"/>
</dbReference>
<dbReference type="PANTHER" id="PTHR43448:SF2">
    <property type="entry name" value="PROTOHEME IX FARNESYLTRANSFERASE, MITOCHONDRIAL"/>
    <property type="match status" value="1"/>
</dbReference>
<dbReference type="Pfam" id="PF01040">
    <property type="entry name" value="UbiA"/>
    <property type="match status" value="1"/>
</dbReference>
<dbReference type="PROSITE" id="PS00943">
    <property type="entry name" value="UBIA"/>
    <property type="match status" value="1"/>
</dbReference>
<feature type="chain" id="PRO_0000345988" description="Protoheme IX farnesyltransferase">
    <location>
        <begin position="1"/>
        <end position="292"/>
    </location>
</feature>
<feature type="transmembrane region" description="Helical" evidence="1">
    <location>
        <begin position="13"/>
        <end position="33"/>
    </location>
</feature>
<feature type="transmembrane region" description="Helical" evidence="1">
    <location>
        <begin position="35"/>
        <end position="55"/>
    </location>
</feature>
<feature type="transmembrane region" description="Helical" evidence="1">
    <location>
        <begin position="84"/>
        <end position="104"/>
    </location>
</feature>
<feature type="transmembrane region" description="Helical" evidence="1">
    <location>
        <begin position="106"/>
        <end position="126"/>
    </location>
</feature>
<feature type="transmembrane region" description="Helical" evidence="1">
    <location>
        <begin position="135"/>
        <end position="155"/>
    </location>
</feature>
<feature type="transmembrane region" description="Helical" evidence="1">
    <location>
        <begin position="161"/>
        <end position="181"/>
    </location>
</feature>
<feature type="transmembrane region" description="Helical" evidence="1">
    <location>
        <begin position="206"/>
        <end position="226"/>
    </location>
</feature>
<feature type="transmembrane region" description="Helical" evidence="1">
    <location>
        <begin position="231"/>
        <end position="251"/>
    </location>
</feature>
<feature type="transmembrane region" description="Helical" evidence="1">
    <location>
        <begin position="263"/>
        <end position="283"/>
    </location>
</feature>